<evidence type="ECO:0000250" key="1">
    <source>
        <dbReference type="UniProtKB" id="Q9ER97"/>
    </source>
</evidence>
<evidence type="ECO:0000250" key="2">
    <source>
        <dbReference type="UniProtKB" id="Q9NPG2"/>
    </source>
</evidence>
<evidence type="ECO:0000255" key="3">
    <source>
        <dbReference type="PROSITE-ProRule" id="PRU00238"/>
    </source>
</evidence>
<evidence type="ECO:0000305" key="4">
    <source ref="1"/>
</evidence>
<keyword id="KW-0963">Cytoplasm</keyword>
<keyword id="KW-0349">Heme</keyword>
<keyword id="KW-0408">Iron</keyword>
<keyword id="KW-0479">Metal-binding</keyword>
<keyword id="KW-0496">Mitochondrion</keyword>
<keyword id="KW-0560">Oxidoreductase</keyword>
<gene>
    <name type="primary">ngb1</name>
</gene>
<protein>
    <recommendedName>
        <fullName evidence="4">Neuroglobin-1</fullName>
    </recommendedName>
    <alternativeName>
        <fullName evidence="2">Nitrite reductase</fullName>
        <ecNumber evidence="2">1.7.-.-</ecNumber>
    </alternativeName>
</protein>
<dbReference type="EC" id="1.7.-.-" evidence="2"/>
<dbReference type="EMBL" id="AJ547800">
    <property type="protein sequence ID" value="CAD68068.1"/>
    <property type="molecule type" value="mRNA"/>
</dbReference>
<dbReference type="RefSeq" id="NP_001117860.1">
    <property type="nucleotide sequence ID" value="NM_001124388.1"/>
</dbReference>
<dbReference type="SMR" id="P59742"/>
<dbReference type="GeneID" id="100136082"/>
<dbReference type="KEGG" id="omy:100136082"/>
<dbReference type="CTD" id="100136082"/>
<dbReference type="OrthoDB" id="436496at2759"/>
<dbReference type="Proteomes" id="UP000694395">
    <property type="component" value="Unplaced"/>
</dbReference>
<dbReference type="GO" id="GO:0005829">
    <property type="term" value="C:cytosol"/>
    <property type="evidence" value="ECO:0007669"/>
    <property type="project" value="UniProtKB-SubCell"/>
</dbReference>
<dbReference type="GO" id="GO:0005759">
    <property type="term" value="C:mitochondrial matrix"/>
    <property type="evidence" value="ECO:0007669"/>
    <property type="project" value="UniProtKB-SubCell"/>
</dbReference>
<dbReference type="GO" id="GO:0005092">
    <property type="term" value="F:GDP-dissociation inhibitor activity"/>
    <property type="evidence" value="ECO:0000250"/>
    <property type="project" value="UniProtKB"/>
</dbReference>
<dbReference type="GO" id="GO:0020037">
    <property type="term" value="F:heme binding"/>
    <property type="evidence" value="ECO:0007669"/>
    <property type="project" value="InterPro"/>
</dbReference>
<dbReference type="GO" id="GO:0046872">
    <property type="term" value="F:metal ion binding"/>
    <property type="evidence" value="ECO:0007669"/>
    <property type="project" value="UniProtKB-KW"/>
</dbReference>
<dbReference type="GO" id="GO:0098809">
    <property type="term" value="F:nitrite reductase activity"/>
    <property type="evidence" value="ECO:0000250"/>
    <property type="project" value="UniProtKB"/>
</dbReference>
<dbReference type="GO" id="GO:0019825">
    <property type="term" value="F:oxygen binding"/>
    <property type="evidence" value="ECO:0000250"/>
    <property type="project" value="UniProtKB"/>
</dbReference>
<dbReference type="GO" id="GO:0071456">
    <property type="term" value="P:cellular response to hypoxia"/>
    <property type="evidence" value="ECO:0000250"/>
    <property type="project" value="UniProtKB"/>
</dbReference>
<dbReference type="Gene3D" id="1.10.490.10">
    <property type="entry name" value="Globins"/>
    <property type="match status" value="1"/>
</dbReference>
<dbReference type="InterPro" id="IPR000971">
    <property type="entry name" value="Globin"/>
</dbReference>
<dbReference type="InterPro" id="IPR050532">
    <property type="entry name" value="Globin-like_OT"/>
</dbReference>
<dbReference type="InterPro" id="IPR009050">
    <property type="entry name" value="Globin-like_sf"/>
</dbReference>
<dbReference type="InterPro" id="IPR012292">
    <property type="entry name" value="Globin/Proto"/>
</dbReference>
<dbReference type="PANTHER" id="PTHR46458">
    <property type="entry name" value="BLR2807 PROTEIN"/>
    <property type="match status" value="1"/>
</dbReference>
<dbReference type="PANTHER" id="PTHR46458:SF19">
    <property type="entry name" value="NEUROGLOBIN"/>
    <property type="match status" value="1"/>
</dbReference>
<dbReference type="Pfam" id="PF00042">
    <property type="entry name" value="Globin"/>
    <property type="match status" value="1"/>
</dbReference>
<dbReference type="PRINTS" id="PR00188">
    <property type="entry name" value="PLANTGLOBIN"/>
</dbReference>
<dbReference type="SUPFAM" id="SSF46458">
    <property type="entry name" value="Globin-like"/>
    <property type="match status" value="1"/>
</dbReference>
<dbReference type="PROSITE" id="PS01033">
    <property type="entry name" value="GLOBIN"/>
    <property type="match status" value="1"/>
</dbReference>
<comment type="function">
    <text evidence="2">Monomeric globin with a bis-histidyl six-coordinate heme-iron atom through which it can bind dioxygen, carbon monoxide and nitric oxide. Could help transport oxygen and increase its availability to the metabolically active neuronal tissues, though its low quantity in tissues as well as its high affinity for dioxygen, which may limit its oxygen-releasing ability, argue against it. The ferrous/deoxygenated form exhibits a nitrite reductase activity and it could produce nitric oxide which in turn inhibits cellular respiration in response to hypoxia. In its ferrous/deoxygenated state, it may also exhibit GDI (Guanine nucleotide Dissociation Inhibitor) activity toward heterotrimeric G-alpha proteins, thereby regulating signal transduction to facilitate neuroprotective responses in the wake of hypoxia and associated oxidative stress.</text>
</comment>
<comment type="catalytic activity">
    <reaction evidence="2">
        <text>Fe(III)-heme b-[protein] + nitric oxide + H2O = Fe(II)-heme b-[protein] + nitrite + 2 H(+)</text>
        <dbReference type="Rhea" id="RHEA:77711"/>
        <dbReference type="Rhea" id="RHEA-COMP:18975"/>
        <dbReference type="Rhea" id="RHEA-COMP:18976"/>
        <dbReference type="ChEBI" id="CHEBI:15377"/>
        <dbReference type="ChEBI" id="CHEBI:15378"/>
        <dbReference type="ChEBI" id="CHEBI:16301"/>
        <dbReference type="ChEBI" id="CHEBI:16480"/>
        <dbReference type="ChEBI" id="CHEBI:55376"/>
        <dbReference type="ChEBI" id="CHEBI:60344"/>
    </reaction>
    <physiologicalReaction direction="right-to-left" evidence="2">
        <dbReference type="Rhea" id="RHEA:77713"/>
    </physiologicalReaction>
</comment>
<comment type="subunit">
    <text evidence="1 2">Monomer (By similarity). Homodimers and homotetramers. Mainly monomeric but also detected as part of homodimers and homotetramers (By similarity).</text>
</comment>
<comment type="subcellular location">
    <subcellularLocation>
        <location evidence="1">Cytoplasm</location>
        <location evidence="1">Cytosol</location>
    </subcellularLocation>
    <subcellularLocation>
        <location evidence="1">Mitochondrion matrix</location>
    </subcellularLocation>
    <text evidence="1">Enriched in mitochondrial matrix upon oxygen-glucose deprivation.</text>
</comment>
<comment type="similarity">
    <text evidence="3">Belongs to the globin family.</text>
</comment>
<feature type="chain" id="PRO_0000053399" description="Neuroglobin-1">
    <location>
        <begin position="1"/>
        <end position="159"/>
    </location>
</feature>
<feature type="domain" description="Globin" evidence="3">
    <location>
        <begin position="3"/>
        <end position="151"/>
    </location>
</feature>
<feature type="binding site" description="distal binding residue; reversible" evidence="2 3">
    <location>
        <position position="66"/>
    </location>
    <ligand>
        <name>heme b</name>
        <dbReference type="ChEBI" id="CHEBI:60344"/>
    </ligand>
    <ligandPart>
        <name>Fe</name>
        <dbReference type="ChEBI" id="CHEBI:18248"/>
    </ligandPart>
</feature>
<feature type="binding site" description="proximal binding residue" evidence="2 3">
    <location>
        <position position="98"/>
    </location>
    <ligand>
        <name>heme b</name>
        <dbReference type="ChEBI" id="CHEBI:60344"/>
    </ligand>
    <ligandPart>
        <name>Fe</name>
        <dbReference type="ChEBI" id="CHEBI:18248"/>
    </ligandPart>
</feature>
<name>NGB1_ONCMY</name>
<reference key="1">
    <citation type="submission" date="2003-02" db="EMBL/GenBank/DDBJ databases">
        <title>Neuroglobin cDNA sequences of from the rainbow trout, Oncorhynchus mykiss.</title>
        <authorList>
            <person name="Rosner A."/>
            <person name="Milke C."/>
            <person name="Hankeln T."/>
            <person name="Burmester T."/>
        </authorList>
    </citation>
    <scope>NUCLEOTIDE SEQUENCE [MRNA]</scope>
</reference>
<organism>
    <name type="scientific">Oncorhynchus mykiss</name>
    <name type="common">Rainbow trout</name>
    <name type="synonym">Salmo gairdneri</name>
    <dbReference type="NCBI Taxonomy" id="8022"/>
    <lineage>
        <taxon>Eukaryota</taxon>
        <taxon>Metazoa</taxon>
        <taxon>Chordata</taxon>
        <taxon>Craniata</taxon>
        <taxon>Vertebrata</taxon>
        <taxon>Euteleostomi</taxon>
        <taxon>Actinopterygii</taxon>
        <taxon>Neopterygii</taxon>
        <taxon>Teleostei</taxon>
        <taxon>Protacanthopterygii</taxon>
        <taxon>Salmoniformes</taxon>
        <taxon>Salmonidae</taxon>
        <taxon>Salmoninae</taxon>
        <taxon>Oncorhynchus</taxon>
    </lineage>
</organism>
<proteinExistence type="evidence at transcript level"/>
<accession>P59742</accession>
<sequence>MEKLTEKEKELIRVSWESLGKDKVPHGVIMFSRLFELEPALLNLFHYNTNCGTIQDCLSSPEFLDHVTKVMLVIDAAVSHLDNLHTLEDFLLNLGKKHQAVGVNTQSFAVVGESLLYMLQCSLGQGYTAPLRQAWLNMYTIVVAAMSRGWAKNGEHKTD</sequence>